<comment type="function">
    <text evidence="4 5 6 7">Catalyzes two steps in the biosynthesis of the molybdenum cofactor. In the first step, molybdopterin is adenylated. Subsequently, molybdate is inserted into adenylated molybdopterin and AMP is released.</text>
</comment>
<comment type="catalytic activity">
    <reaction>
        <text>adenylyl-molybdopterin + molybdate = Mo-molybdopterin + AMP + H(+)</text>
        <dbReference type="Rhea" id="RHEA:35047"/>
        <dbReference type="ChEBI" id="CHEBI:15378"/>
        <dbReference type="ChEBI" id="CHEBI:36264"/>
        <dbReference type="ChEBI" id="CHEBI:62727"/>
        <dbReference type="ChEBI" id="CHEBI:71302"/>
        <dbReference type="ChEBI" id="CHEBI:456215"/>
        <dbReference type="EC" id="2.10.1.1"/>
    </reaction>
</comment>
<comment type="catalytic activity">
    <reaction>
        <text>molybdopterin + ATP + H(+) = adenylyl-molybdopterin + diphosphate</text>
        <dbReference type="Rhea" id="RHEA:31331"/>
        <dbReference type="ChEBI" id="CHEBI:15378"/>
        <dbReference type="ChEBI" id="CHEBI:30616"/>
        <dbReference type="ChEBI" id="CHEBI:33019"/>
        <dbReference type="ChEBI" id="CHEBI:58698"/>
        <dbReference type="ChEBI" id="CHEBI:62727"/>
        <dbReference type="EC" id="2.7.7.75"/>
    </reaction>
</comment>
<comment type="cofactor">
    <cofactor evidence="5 6">
        <name>Mg(2+)</name>
        <dbReference type="ChEBI" id="CHEBI:18420"/>
    </cofactor>
</comment>
<comment type="activity regulation">
    <text evidence="5">Inhibited by copper and tungsten.</text>
</comment>
<comment type="biophysicochemical properties">
    <kinetics>
        <KM evidence="6 7">62 uM for ATP for domain G</KM>
        <KM evidence="6 7">133 uM for Zn(2+) for domain E</KM>
        <KM evidence="6 7">255 uM for Mg(2+) for domain E</KM>
    </kinetics>
</comment>
<comment type="pathway">
    <text>Cofactor biosynthesis; molybdopterin biosynthesis.</text>
</comment>
<comment type="subunit">
    <text evidence="3 4 5 8">The G domain: homotrimer or homohexamer. The E domain: homodimer.</text>
</comment>
<comment type="similarity">
    <text evidence="9">In the N-terminal section; belongs to the MoaB/Mog family.</text>
</comment>
<comment type="similarity">
    <text evidence="9">In the C-terminal section; belongs to the MoeA family.</text>
</comment>
<keyword id="KW-0002">3D-structure</keyword>
<keyword id="KW-0067">ATP-binding</keyword>
<keyword id="KW-0460">Magnesium</keyword>
<keyword id="KW-0479">Metal-binding</keyword>
<keyword id="KW-0500">Molybdenum</keyword>
<keyword id="KW-0501">Molybdenum cofactor biosynthesis</keyword>
<keyword id="KW-0511">Multifunctional enzyme</keyword>
<keyword id="KW-0547">Nucleotide-binding</keyword>
<keyword id="KW-1185">Reference proteome</keyword>
<keyword id="KW-0808">Transferase</keyword>
<proteinExistence type="evidence at protein level"/>
<feature type="chain" id="PRO_0000170963" description="Molybdopterin biosynthesis protein CNX1">
    <location>
        <begin position="1"/>
        <end position="670"/>
    </location>
</feature>
<feature type="region of interest" description="MPT Mo-transferase">
    <location>
        <begin position="19"/>
        <end position="439"/>
    </location>
</feature>
<feature type="region of interest" description="MPT adenylyltransferase">
    <location>
        <begin position="466"/>
        <end position="620"/>
    </location>
</feature>
<feature type="region of interest" description="Disordered" evidence="1">
    <location>
        <begin position="624"/>
        <end position="643"/>
    </location>
</feature>
<feature type="binding site">
    <location>
        <position position="485"/>
    </location>
    <ligand>
        <name>AMP</name>
        <dbReference type="ChEBI" id="CHEBI:456215"/>
    </ligand>
</feature>
<feature type="binding site">
    <location>
        <position position="486"/>
    </location>
    <ligand>
        <name>AMP</name>
        <dbReference type="ChEBI" id="CHEBI:456215"/>
    </ligand>
</feature>
<feature type="binding site">
    <location>
        <position position="541"/>
    </location>
    <ligand>
        <name>AMP</name>
        <dbReference type="ChEBI" id="CHEBI:456215"/>
    </ligand>
</feature>
<feature type="binding site">
    <location>
        <begin position="542"/>
        <end position="543"/>
    </location>
    <ligand>
        <name>substrate</name>
    </ligand>
</feature>
<feature type="binding site" evidence="5">
    <location>
        <position position="573"/>
    </location>
    <ligand>
        <name>substrate</name>
    </ligand>
</feature>
<feature type="binding site">
    <location>
        <position position="600"/>
    </location>
    <ligand>
        <name>AMP</name>
        <dbReference type="ChEBI" id="CHEBI:456215"/>
    </ligand>
</feature>
<feature type="binding site" evidence="5">
    <location>
        <position position="600"/>
    </location>
    <ligand>
        <name>substrate</name>
    </ligand>
</feature>
<feature type="binding site" evidence="5">
    <location>
        <position position="607"/>
    </location>
    <ligand>
        <name>substrate</name>
    </ligand>
</feature>
<feature type="mutagenesis site" description="Reduced molybdopterin binding. Loss of adenylation activity." evidence="4">
    <original>S</original>
    <variation>D</variation>
    <location>
        <position position="475"/>
    </location>
</feature>
<feature type="mutagenesis site" description="Reduced molybdopterin binding. Loss of adenylation activity." evidence="4">
    <original>D</original>
    <variation>S</variation>
    <location>
        <position position="485"/>
    </location>
</feature>
<feature type="mutagenesis site" description="Almost normal molybdopterin binding. Loss adenylation activity." evidence="2 4">
    <original>D</original>
    <variation>H</variation>
    <variation>N</variation>
    <location>
        <position position="515"/>
    </location>
</feature>
<feature type="mutagenesis site" description="Strongly reduced molybdopterin binding. Reduced activity." evidence="4">
    <original>T</original>
    <variation>A</variation>
    <location>
        <position position="542"/>
    </location>
</feature>
<feature type="mutagenesis site" description="Loss of molybdopterin binding. Loss of activity." evidence="4">
    <original>T</original>
    <variation>D</variation>
    <variation>N</variation>
    <location>
        <position position="542"/>
    </location>
</feature>
<feature type="mutagenesis site" description="Reduced molybdopterin binding. No effect on activity." evidence="4">
    <original>T</original>
    <variation>S</variation>
    <location>
        <position position="542"/>
    </location>
</feature>
<feature type="mutagenesis site" description="Strongly reduced molybdopterin binding. No effect on activity." evidence="4">
    <original>T</original>
    <variation>V</variation>
    <location>
        <position position="542"/>
    </location>
</feature>
<feature type="mutagenesis site" description="No effect on molybdopterin binding. Clear reduction in adenylation activity." evidence="4">
    <original>R</original>
    <variation>E</variation>
    <location>
        <position position="547"/>
    </location>
</feature>
<feature type="mutagenesis site" description="Impaired folding. Loss of activity." evidence="2">
    <original>V</original>
    <variation>G</variation>
    <location>
        <position position="557"/>
    </location>
</feature>
<feature type="mutagenesis site" description="Loss of molybdopterin binding. Loss of activity." evidence="4">
    <original>S</original>
    <variation>A</variation>
    <location>
        <position position="573"/>
    </location>
</feature>
<feature type="mutagenesis site" description="No effect on activity." evidence="6">
    <original>S</original>
    <variation>A</variation>
    <location>
        <position position="583"/>
    </location>
</feature>
<feature type="mutagenesis site" description="Loss of molybdopterin binding. Loss of activity." evidence="2">
    <original>N</original>
    <variation>L</variation>
    <location>
        <position position="597"/>
    </location>
</feature>
<feature type="sequence conflict" description="In Ref. 1 and 2." evidence="9" ref="1 2">
    <original>D</original>
    <variation>V</variation>
    <location>
        <position position="113"/>
    </location>
</feature>
<feature type="sequence conflict" description="In Ref. 1 and 2." evidence="9" ref="1 2">
    <original>S</original>
    <variation>A</variation>
    <location>
        <position position="134"/>
    </location>
</feature>
<feature type="sequence conflict" description="In Ref. 1 and 2." evidence="9" ref="1 2">
    <original>S</original>
    <variation>L</variation>
    <location>
        <position position="653"/>
    </location>
</feature>
<feature type="helix" evidence="12">
    <location>
        <begin position="19"/>
        <end position="29"/>
    </location>
</feature>
<feature type="strand" evidence="12">
    <location>
        <begin position="36"/>
        <end position="39"/>
    </location>
</feature>
<feature type="helix" evidence="12">
    <location>
        <begin position="41"/>
        <end position="43"/>
    </location>
</feature>
<feature type="strand" evidence="12">
    <location>
        <begin position="46"/>
        <end position="50"/>
    </location>
</feature>
<feature type="strand" evidence="12">
    <location>
        <begin position="58"/>
        <end position="61"/>
    </location>
</feature>
<feature type="strand" evidence="12">
    <location>
        <begin position="63"/>
        <end position="71"/>
    </location>
</feature>
<feature type="helix" evidence="12">
    <location>
        <begin position="73"/>
        <end position="75"/>
    </location>
</feature>
<feature type="strand" evidence="12">
    <location>
        <begin position="77"/>
        <end position="88"/>
    </location>
</feature>
<feature type="turn" evidence="12">
    <location>
        <begin position="89"/>
        <end position="94"/>
    </location>
</feature>
<feature type="strand" evidence="12">
    <location>
        <begin position="102"/>
        <end position="105"/>
    </location>
</feature>
<feature type="strand" evidence="12">
    <location>
        <begin position="117"/>
        <end position="120"/>
    </location>
</feature>
<feature type="helix" evidence="12">
    <location>
        <begin position="121"/>
        <end position="123"/>
    </location>
</feature>
<feature type="strand" evidence="12">
    <location>
        <begin position="124"/>
        <end position="127"/>
    </location>
</feature>
<feature type="strand" evidence="11">
    <location>
        <begin position="130"/>
        <end position="134"/>
    </location>
</feature>
<feature type="strand" evidence="12">
    <location>
        <begin position="136"/>
        <end position="139"/>
    </location>
</feature>
<feature type="turn" evidence="12">
    <location>
        <begin position="145"/>
        <end position="148"/>
    </location>
</feature>
<feature type="strand" evidence="12">
    <location>
        <begin position="154"/>
        <end position="156"/>
    </location>
</feature>
<feature type="strand" evidence="12">
    <location>
        <begin position="161"/>
        <end position="163"/>
    </location>
</feature>
<feature type="helix" evidence="12">
    <location>
        <begin position="171"/>
        <end position="179"/>
    </location>
</feature>
<feature type="strand" evidence="12">
    <location>
        <begin position="184"/>
        <end position="188"/>
    </location>
</feature>
<feature type="strand" evidence="12">
    <location>
        <begin position="193"/>
        <end position="198"/>
    </location>
</feature>
<feature type="helix" evidence="12">
    <location>
        <begin position="219"/>
        <end position="229"/>
    </location>
</feature>
<feature type="strand" evidence="12">
    <location>
        <begin position="234"/>
        <end position="240"/>
    </location>
</feature>
<feature type="helix" evidence="12">
    <location>
        <begin position="244"/>
        <end position="256"/>
    </location>
</feature>
<feature type="strand" evidence="12">
    <location>
        <begin position="260"/>
        <end position="271"/>
    </location>
</feature>
<feature type="helix" evidence="12">
    <location>
        <begin position="276"/>
        <end position="283"/>
    </location>
</feature>
<feature type="strand" evidence="12">
    <location>
        <begin position="284"/>
        <end position="289"/>
    </location>
</feature>
<feature type="turn" evidence="12">
    <location>
        <begin position="295"/>
        <end position="298"/>
    </location>
</feature>
<feature type="strand" evidence="12">
    <location>
        <begin position="300"/>
        <end position="305"/>
    </location>
</feature>
<feature type="strand" evidence="12">
    <location>
        <begin position="316"/>
        <end position="322"/>
    </location>
</feature>
<feature type="helix" evidence="12">
    <location>
        <begin position="326"/>
        <end position="344"/>
    </location>
</feature>
<feature type="strand" evidence="12">
    <location>
        <begin position="354"/>
        <end position="361"/>
    </location>
</feature>
<feature type="strand" evidence="12">
    <location>
        <begin position="367"/>
        <end position="369"/>
    </location>
</feature>
<feature type="strand" evidence="12">
    <location>
        <begin position="371"/>
        <end position="381"/>
    </location>
</feature>
<feature type="strand" evidence="12">
    <location>
        <begin position="384"/>
        <end position="387"/>
    </location>
</feature>
<feature type="strand" evidence="12">
    <location>
        <begin position="389"/>
        <end position="394"/>
    </location>
</feature>
<feature type="helix" evidence="12">
    <location>
        <begin position="403"/>
        <end position="406"/>
    </location>
</feature>
<feature type="strand" evidence="12">
    <location>
        <begin position="411"/>
        <end position="415"/>
    </location>
</feature>
<feature type="strand" evidence="11">
    <location>
        <begin position="420"/>
        <end position="422"/>
    </location>
</feature>
<feature type="strand" evidence="12">
    <location>
        <begin position="427"/>
        <end position="432"/>
    </location>
</feature>
<feature type="helix" evidence="12">
    <location>
        <begin position="436"/>
        <end position="438"/>
    </location>
</feature>
<feature type="strand" evidence="10">
    <location>
        <begin position="466"/>
        <end position="474"/>
    </location>
</feature>
<feature type="helix" evidence="10">
    <location>
        <begin position="476"/>
        <end position="479"/>
    </location>
</feature>
<feature type="helix" evidence="10">
    <location>
        <begin position="487"/>
        <end position="497"/>
    </location>
</feature>
<feature type="turn" evidence="10">
    <location>
        <begin position="498"/>
        <end position="503"/>
    </location>
</feature>
<feature type="strand" evidence="10">
    <location>
        <begin position="504"/>
        <end position="513"/>
    </location>
</feature>
<feature type="helix" evidence="10">
    <location>
        <begin position="517"/>
        <end position="529"/>
    </location>
</feature>
<feature type="strand" evidence="10">
    <location>
        <begin position="534"/>
        <end position="540"/>
    </location>
</feature>
<feature type="strand" evidence="10">
    <location>
        <begin position="543"/>
        <end position="545"/>
    </location>
</feature>
<feature type="helix" evidence="10">
    <location>
        <begin position="550"/>
        <end position="557"/>
    </location>
</feature>
<feature type="strand" evidence="10">
    <location>
        <begin position="559"/>
        <end position="561"/>
    </location>
</feature>
<feature type="helix" evidence="10">
    <location>
        <begin position="563"/>
        <end position="576"/>
    </location>
</feature>
<feature type="helix" evidence="10">
    <location>
        <begin position="578"/>
        <end position="582"/>
    </location>
</feature>
<feature type="strand" evidence="10">
    <location>
        <begin position="587"/>
        <end position="590"/>
    </location>
</feature>
<feature type="strand" evidence="10">
    <location>
        <begin position="593"/>
        <end position="598"/>
    </location>
</feature>
<feature type="helix" evidence="10">
    <location>
        <begin position="604"/>
        <end position="623"/>
    </location>
</feature>
<evidence type="ECO:0000256" key="1">
    <source>
        <dbReference type="SAM" id="MobiDB-lite"/>
    </source>
</evidence>
<evidence type="ECO:0000269" key="2">
    <source>
    </source>
</evidence>
<evidence type="ECO:0000269" key="3">
    <source>
    </source>
</evidence>
<evidence type="ECO:0000269" key="4">
    <source>
    </source>
</evidence>
<evidence type="ECO:0000269" key="5">
    <source>
    </source>
</evidence>
<evidence type="ECO:0000269" key="6">
    <source>
    </source>
</evidence>
<evidence type="ECO:0000269" key="7">
    <source>
    </source>
</evidence>
<evidence type="ECO:0000269" key="8">
    <source>
    </source>
</evidence>
<evidence type="ECO:0000305" key="9"/>
<evidence type="ECO:0007829" key="10">
    <source>
        <dbReference type="PDB" id="1UUY"/>
    </source>
</evidence>
<evidence type="ECO:0007829" key="11">
    <source>
        <dbReference type="PDB" id="6ETH"/>
    </source>
</evidence>
<evidence type="ECO:0007829" key="12">
    <source>
        <dbReference type="PDB" id="6Q32"/>
    </source>
</evidence>
<sequence>MEGQGCCGGGGGKTEMIPTEEALRIVFGVSKRLPPVIVSLYEALGKVLAEDIRAPDPLPPYPASVKDGYAVVASDGPGEYPVITESRAGNDGLGVTVTPGTVAYVTTGGPIPDGADAVVQVEDTKVIGDVSTESKRVKILIQTKKGTDIRRVGCDIEKDATVLTTGERIGASEIGLLATAGVTMVKVYPMPIVAILSTGDELVEPTAGTLGRGQIRDSNRAMLVAAVMQQQCKVVDLGIVRDDRKELEKVLDEAVSSGVDIILTSGGVSMGDRDFVKPLLEEKGKVYFSKVLMKPGKPLTFAEIRAKPTESMLGKTVLAFGLPGNPVSCLVCFNIFVVPTIRQLAGWTSPHPLRVRLRLQEPIKSDPIRPEFHRAIIKWKDNDGSGTPGFVAESTGHQMSSRLLSMRSANALLELPATGNVLSAGSSVSAIIVSDISAFSIDKKASLSEPGSIRKEKKYDEVPGPEYKVAILTVSDTVSAGAGPDRSGPRAVSVVDSSSEKLGGAKVVATAVVPDEVERIKDILQKWSDVDEMDLILTLGGTGFTPRDVTPEATKKVIERETPGLLFVMMQESLKITPFAMLSRSAAGIRGSTLIINMPGNPNAVAECMEALLPALKHALKQIKGDKREKHPKHIPHAEATLPTDTWDQSYKSAYETGEKKEEAGCSCTH</sequence>
<gene>
    <name type="primary">CNX1</name>
    <name type="ordered locus">At5g20990</name>
    <name type="ORF">F22D1.6</name>
    <name type="ORF">T10F18.20</name>
</gene>
<organism>
    <name type="scientific">Arabidopsis thaliana</name>
    <name type="common">Mouse-ear cress</name>
    <dbReference type="NCBI Taxonomy" id="3702"/>
    <lineage>
        <taxon>Eukaryota</taxon>
        <taxon>Viridiplantae</taxon>
        <taxon>Streptophyta</taxon>
        <taxon>Embryophyta</taxon>
        <taxon>Tracheophyta</taxon>
        <taxon>Spermatophyta</taxon>
        <taxon>Magnoliopsida</taxon>
        <taxon>eudicotyledons</taxon>
        <taxon>Gunneridae</taxon>
        <taxon>Pentapetalae</taxon>
        <taxon>rosids</taxon>
        <taxon>malvids</taxon>
        <taxon>Brassicales</taxon>
        <taxon>Brassicaceae</taxon>
        <taxon>Camelineae</taxon>
        <taxon>Arabidopsis</taxon>
    </lineage>
</organism>
<reference key="1">
    <citation type="journal article" date="1995" name="Plant J.">
        <title>Molybdenum co-factor biosynthesis: the Arabidopsis thaliana cDNA cnx1 encodes a multifunctional two-domain protein homologous to a mammalian neuroprotein, the insect protein Cinnamon and three Escherichia coli proteins.</title>
        <authorList>
            <person name="Stallmeyer B."/>
            <person name="Nerlich A."/>
            <person name="Schiemann J."/>
            <person name="Brinkmann H."/>
            <person name="Mendel R.R."/>
        </authorList>
    </citation>
    <scope>NUCLEOTIDE SEQUENCE [MRNA]</scope>
    <source>
        <strain>cv. Columbia</strain>
    </source>
</reference>
<reference key="2">
    <citation type="submission" date="1999-03" db="EMBL/GenBank/DDBJ databases">
        <title>Sequence of the Arabidopsis thaliana gene cnx1 that is involved in the last step of molybdenum cofactor biosynthesis.</title>
        <authorList>
            <person name="Brinkmann H."/>
            <person name="Schledzewski K."/>
            <person name="Nerlich A."/>
            <person name="Bollmann G."/>
            <person name="Stallmeyer B."/>
            <person name="Mendel R.R."/>
        </authorList>
    </citation>
    <scope>NUCLEOTIDE SEQUENCE [GENOMIC DNA]</scope>
    <source>
        <strain>cv. Columbia</strain>
    </source>
</reference>
<reference key="3">
    <citation type="journal article" date="2000" name="Nature">
        <title>Sequence and analysis of chromosome 5 of the plant Arabidopsis thaliana.</title>
        <authorList>
            <person name="Tabata S."/>
            <person name="Kaneko T."/>
            <person name="Nakamura Y."/>
            <person name="Kotani H."/>
            <person name="Kato T."/>
            <person name="Asamizu E."/>
            <person name="Miyajima N."/>
            <person name="Sasamoto S."/>
            <person name="Kimura T."/>
            <person name="Hosouchi T."/>
            <person name="Kawashima K."/>
            <person name="Kohara M."/>
            <person name="Matsumoto M."/>
            <person name="Matsuno A."/>
            <person name="Muraki A."/>
            <person name="Nakayama S."/>
            <person name="Nakazaki N."/>
            <person name="Naruo K."/>
            <person name="Okumura S."/>
            <person name="Shinpo S."/>
            <person name="Takeuchi C."/>
            <person name="Wada T."/>
            <person name="Watanabe A."/>
            <person name="Yamada M."/>
            <person name="Yasuda M."/>
            <person name="Sato S."/>
            <person name="de la Bastide M."/>
            <person name="Huang E."/>
            <person name="Spiegel L."/>
            <person name="Gnoj L."/>
            <person name="O'Shaughnessy A."/>
            <person name="Preston R."/>
            <person name="Habermann K."/>
            <person name="Murray J."/>
            <person name="Johnson D."/>
            <person name="Rohlfing T."/>
            <person name="Nelson J."/>
            <person name="Stoneking T."/>
            <person name="Pepin K."/>
            <person name="Spieth J."/>
            <person name="Sekhon M."/>
            <person name="Armstrong J."/>
            <person name="Becker M."/>
            <person name="Belter E."/>
            <person name="Cordum H."/>
            <person name="Cordes M."/>
            <person name="Courtney L."/>
            <person name="Courtney W."/>
            <person name="Dante M."/>
            <person name="Du H."/>
            <person name="Edwards J."/>
            <person name="Fryman J."/>
            <person name="Haakensen B."/>
            <person name="Lamar E."/>
            <person name="Latreille P."/>
            <person name="Leonard S."/>
            <person name="Meyer R."/>
            <person name="Mulvaney E."/>
            <person name="Ozersky P."/>
            <person name="Riley A."/>
            <person name="Strowmatt C."/>
            <person name="Wagner-McPherson C."/>
            <person name="Wollam A."/>
            <person name="Yoakum M."/>
            <person name="Bell M."/>
            <person name="Dedhia N."/>
            <person name="Parnell L."/>
            <person name="Shah R."/>
            <person name="Rodriguez M."/>
            <person name="Hoon See L."/>
            <person name="Vil D."/>
            <person name="Baker J."/>
            <person name="Kirchoff K."/>
            <person name="Toth K."/>
            <person name="King L."/>
            <person name="Bahret A."/>
            <person name="Miller B."/>
            <person name="Marra M.A."/>
            <person name="Martienssen R."/>
            <person name="McCombie W.R."/>
            <person name="Wilson R.K."/>
            <person name="Murphy G."/>
            <person name="Bancroft I."/>
            <person name="Volckaert G."/>
            <person name="Wambutt R."/>
            <person name="Duesterhoeft A."/>
            <person name="Stiekema W."/>
            <person name="Pohl T."/>
            <person name="Entian K.-D."/>
            <person name="Terryn N."/>
            <person name="Hartley N."/>
            <person name="Bent E."/>
            <person name="Johnson S."/>
            <person name="Langham S.-A."/>
            <person name="McCullagh B."/>
            <person name="Robben J."/>
            <person name="Grymonprez B."/>
            <person name="Zimmermann W."/>
            <person name="Ramsperger U."/>
            <person name="Wedler H."/>
            <person name="Balke K."/>
            <person name="Wedler E."/>
            <person name="Peters S."/>
            <person name="van Staveren M."/>
            <person name="Dirkse W."/>
            <person name="Mooijman P."/>
            <person name="Klein Lankhorst R."/>
            <person name="Weitzenegger T."/>
            <person name="Bothe G."/>
            <person name="Rose M."/>
            <person name="Hauf J."/>
            <person name="Berneiser S."/>
            <person name="Hempel S."/>
            <person name="Feldpausch M."/>
            <person name="Lamberth S."/>
            <person name="Villarroel R."/>
            <person name="Gielen J."/>
            <person name="Ardiles W."/>
            <person name="Bents O."/>
            <person name="Lemcke K."/>
            <person name="Kolesov G."/>
            <person name="Mayer K.F.X."/>
            <person name="Rudd S."/>
            <person name="Schoof H."/>
            <person name="Schueller C."/>
            <person name="Zaccaria P."/>
            <person name="Mewes H.-W."/>
            <person name="Bevan M."/>
            <person name="Fransz P.F."/>
        </authorList>
    </citation>
    <scope>NUCLEOTIDE SEQUENCE [LARGE SCALE GENOMIC DNA]</scope>
    <source>
        <strain>cv. Columbia</strain>
    </source>
</reference>
<reference key="4">
    <citation type="journal article" date="2017" name="Plant J.">
        <title>Araport11: a complete reannotation of the Arabidopsis thaliana reference genome.</title>
        <authorList>
            <person name="Cheng C.Y."/>
            <person name="Krishnakumar V."/>
            <person name="Chan A.P."/>
            <person name="Thibaud-Nissen F."/>
            <person name="Schobel S."/>
            <person name="Town C.D."/>
        </authorList>
    </citation>
    <scope>GENOME REANNOTATION</scope>
    <source>
        <strain>cv. Columbia</strain>
    </source>
</reference>
<reference key="5">
    <citation type="journal article" date="1997" name="J. Biol. Chem.">
        <title>Molybdenum cofactor biosynthesis. The plant protein Cnx1 binds molybdopterin with high affinity.</title>
        <authorList>
            <person name="Schwarz G."/>
            <person name="Boxer D.H."/>
            <person name="Mendel R.R."/>
        </authorList>
    </citation>
    <scope>BINDING OF MPT TO DOMAIN G</scope>
    <scope>SUBUNIT</scope>
</reference>
<reference key="6">
    <citation type="journal article" date="2000" name="Proc. Natl. Acad. Sci. U.S.A.">
        <title>Mutations in the molybdenum cofactor biosynthetic protein Cnx1G from Arabidopsis thaliana define functions for molybdopterin binding, molybdenum insertion, and molybdenum cofactor stabilization.</title>
        <authorList>
            <person name="Kuper J."/>
            <person name="Palmer T."/>
            <person name="Mendel R.R."/>
            <person name="Schwarz G."/>
        </authorList>
    </citation>
    <scope>MUTAGENESIS OF ASP-515; VAL-557 AND ASN-597</scope>
</reference>
<reference key="7">
    <citation type="journal article" date="2004" name="J. Biol. Chem.">
        <title>Synthesis of adenylated molybdopterin: an essential step for molybdenum insertion.</title>
        <authorList>
            <person name="Llamas A."/>
            <person name="Mendel R.R."/>
            <person name="Schwarz G."/>
        </authorList>
    </citation>
    <scope>FUNCTION OF DOMAIN G AS MPT ADENYLYLTRANSFERASE</scope>
    <scope>CATALYTIC ACTIVITY</scope>
    <scope>SUBSTRATE SPECIFICITY</scope>
    <scope>COFACTOR</scope>
    <scope>MUTAGENESIS</scope>
    <scope>BIOPHYSICOCHEMICAL PROPERTIES</scope>
</reference>
<reference key="8">
    <citation type="journal article" date="2006" name="J. Biol. Chem.">
        <title>The Mechanism of nucleotide-assisted molybdenum insertion into molybdopterin. A novel route toward metal cofactor assembly.</title>
        <authorList>
            <person name="Llamas A."/>
            <person name="Otte T."/>
            <person name="Multhaup G."/>
            <person name="Mendel R.R."/>
            <person name="Schwarz G."/>
        </authorList>
    </citation>
    <scope>FUNCTION OF DOMAIN E AS MOLYBDENUM--MPT-AMP LIGASE</scope>
    <scope>CATALYTIC ACTIVITY</scope>
    <scope>BIOPHYSICOCHEMICAL PROPERTIES</scope>
    <scope>REACTION MECHANISM</scope>
</reference>
<reference key="9">
    <citation type="journal article" date="2001" name="J. Mol. Biol.">
        <title>Crystal structures of human gephyrin and plant Cnx1 G domains: comparative analysis and functional implications.</title>
        <authorList>
            <person name="Schwarz G."/>
            <person name="Schrader N."/>
            <person name="Mendel R.R."/>
            <person name="Hecht H.-J."/>
            <person name="Schindelin H."/>
        </authorList>
    </citation>
    <scope>X-RAY CRYSTALLOGRAPHY (2.6 ANGSTROMS) OF 462-623</scope>
    <scope>SUBUNIT</scope>
</reference>
<reference key="10">
    <citation type="journal article" date="2003" name="Arch. Biochem. Biophys.">
        <title>The active site of the molybdenum cofactor biosynthetic protein domain Cnx1G.</title>
        <authorList>
            <person name="Kuper J."/>
            <person name="Winking J."/>
            <person name="Hecht H.-J."/>
            <person name="Mendel R.R."/>
            <person name="Schwarz G."/>
        </authorList>
    </citation>
    <scope>X-RAY CRYSTALLOGRAPHY (2.8 ANGSTROMS) OF 462-628 OF MUTANTS ALA/ASP-542 AND ALA-573</scope>
    <scope>FUNCTION</scope>
    <scope>MUTAGENESIS OF SER-475; ASP-485; ASP-515; THR-542; ARG-547 AND SER-573</scope>
    <scope>SUBUNIT</scope>
</reference>
<reference key="11">
    <citation type="journal article" date="2004" name="Nature">
        <title>Structure of the molybdopterin-bound Cnx1G domain links molybdenum and copper metabolism.</title>
        <authorList>
            <person name="Kuper J."/>
            <person name="Llamas A."/>
            <person name="Hecht H.-J."/>
            <person name="Mendel R.R."/>
            <person name="Schwarz G."/>
        </authorList>
    </citation>
    <scope>X-RAY CRYSTALLOGRAPHY (1.45 ANGSTROMS) OF 462-623 OF WILD-TYPE AND MUTANT ALA-583 IN COMPLEX WITH SUBSTRATE</scope>
    <scope>FUNCTION</scope>
    <scope>COFACTOR</scope>
    <scope>ACTIVITY REGULATION</scope>
    <scope>SUBUNIT</scope>
</reference>
<dbReference type="EC" id="2.10.1.1"/>
<dbReference type="EC" id="2.7.7.75"/>
<dbReference type="EMBL" id="L47323">
    <property type="protein sequence ID" value="AAA97413.1"/>
    <property type="molecule type" value="mRNA"/>
</dbReference>
<dbReference type="EMBL" id="AJ236870">
    <property type="protein sequence ID" value="CAB38312.1"/>
    <property type="molecule type" value="Genomic_DNA"/>
</dbReference>
<dbReference type="EMBL" id="AC069325">
    <property type="status" value="NOT_ANNOTATED_CDS"/>
    <property type="molecule type" value="Genomic_DNA"/>
</dbReference>
<dbReference type="EMBL" id="AF296834">
    <property type="status" value="NOT_ANNOTATED_CDS"/>
    <property type="molecule type" value="Genomic_DNA"/>
</dbReference>
<dbReference type="EMBL" id="CP002688">
    <property type="protein sequence ID" value="AED92917.1"/>
    <property type="molecule type" value="Genomic_DNA"/>
</dbReference>
<dbReference type="PDB" id="1EAV">
    <property type="method" value="X-ray"/>
    <property type="resolution" value="2.60 A"/>
    <property type="chains" value="A/B/C/D/E/F/G/H=462-623"/>
</dbReference>
<dbReference type="PDB" id="1O8N">
    <property type="method" value="X-ray"/>
    <property type="resolution" value="2.80 A"/>
    <property type="chains" value="A/B/C=462-628"/>
</dbReference>
<dbReference type="PDB" id="1O8O">
    <property type="method" value="X-ray"/>
    <property type="resolution" value="2.70 A"/>
    <property type="chains" value="A/B/C=462-628"/>
</dbReference>
<dbReference type="PDB" id="1O8Q">
    <property type="method" value="X-ray"/>
    <property type="resolution" value="2.60 A"/>
    <property type="chains" value="A/B/C/D/E/F/G/H=462-628"/>
</dbReference>
<dbReference type="PDB" id="1UUX">
    <property type="method" value="X-ray"/>
    <property type="resolution" value="1.60 A"/>
    <property type="chains" value="A=462-623"/>
</dbReference>
<dbReference type="PDB" id="1UUY">
    <property type="method" value="X-ray"/>
    <property type="resolution" value="1.45 A"/>
    <property type="chains" value="A=462-624"/>
</dbReference>
<dbReference type="PDB" id="5G2R">
    <property type="method" value="X-ray"/>
    <property type="resolution" value="2.45 A"/>
    <property type="chains" value="A=1-451"/>
</dbReference>
<dbReference type="PDB" id="5G2S">
    <property type="method" value="X-ray"/>
    <property type="resolution" value="2.84 A"/>
    <property type="chains" value="A=1-451"/>
</dbReference>
<dbReference type="PDB" id="6ETD">
    <property type="method" value="X-ray"/>
    <property type="resolution" value="1.72 A"/>
    <property type="chains" value="A=1-452"/>
</dbReference>
<dbReference type="PDB" id="6ETF">
    <property type="method" value="X-ray"/>
    <property type="resolution" value="1.78 A"/>
    <property type="chains" value="A=1-452"/>
</dbReference>
<dbReference type="PDB" id="6ETH">
    <property type="method" value="X-ray"/>
    <property type="resolution" value="1.64 A"/>
    <property type="chains" value="A=1-452"/>
</dbReference>
<dbReference type="PDB" id="6GAX">
    <property type="method" value="X-ray"/>
    <property type="resolution" value="1.77 A"/>
    <property type="chains" value="A=1-452"/>
</dbReference>
<dbReference type="PDB" id="6GB0">
    <property type="method" value="X-ray"/>
    <property type="resolution" value="1.81 A"/>
    <property type="chains" value="A=1-452"/>
</dbReference>
<dbReference type="PDB" id="6GB4">
    <property type="method" value="X-ray"/>
    <property type="resolution" value="1.65 A"/>
    <property type="chains" value="A=1-450"/>
</dbReference>
<dbReference type="PDB" id="6GB9">
    <property type="method" value="X-ray"/>
    <property type="resolution" value="1.67 A"/>
    <property type="chains" value="A=1-450"/>
</dbReference>
<dbReference type="PDB" id="6GBC">
    <property type="method" value="X-ray"/>
    <property type="resolution" value="1.59 A"/>
    <property type="chains" value="A=1-450"/>
</dbReference>
<dbReference type="PDB" id="6GBF">
    <property type="method" value="X-ray"/>
    <property type="resolution" value="1.71 A"/>
    <property type="chains" value="A=1-450"/>
</dbReference>
<dbReference type="PDB" id="6Q32">
    <property type="method" value="X-ray"/>
    <property type="resolution" value="1.39 A"/>
    <property type="chains" value="A=1-452"/>
</dbReference>
<dbReference type="PDB" id="6RMS">
    <property type="method" value="Other"/>
    <property type="resolution" value="1.74 A"/>
    <property type="chains" value="A=16-442"/>
</dbReference>
<dbReference type="PDBsum" id="1EAV"/>
<dbReference type="PDBsum" id="1O8N"/>
<dbReference type="PDBsum" id="1O8O"/>
<dbReference type="PDBsum" id="1O8Q"/>
<dbReference type="PDBsum" id="1UUX"/>
<dbReference type="PDBsum" id="1UUY"/>
<dbReference type="PDBsum" id="5G2R"/>
<dbReference type="PDBsum" id="5G2S"/>
<dbReference type="PDBsum" id="6ETD"/>
<dbReference type="PDBsum" id="6ETF"/>
<dbReference type="PDBsum" id="6ETH"/>
<dbReference type="PDBsum" id="6GAX"/>
<dbReference type="PDBsum" id="6GB0"/>
<dbReference type="PDBsum" id="6GB4"/>
<dbReference type="PDBsum" id="6GB9"/>
<dbReference type="PDBsum" id="6GBC"/>
<dbReference type="PDBsum" id="6GBF"/>
<dbReference type="PDBsum" id="6Q32"/>
<dbReference type="PDBsum" id="6RMS"/>
<dbReference type="SASBDB" id="Q39054"/>
<dbReference type="SMR" id="Q39054"/>
<dbReference type="BioGRID" id="17499">
    <property type="interactions" value="3"/>
</dbReference>
<dbReference type="FunCoup" id="Q39054">
    <property type="interactions" value="2057"/>
</dbReference>
<dbReference type="STRING" id="3702.Q39054"/>
<dbReference type="GlyGen" id="Q39054">
    <property type="glycosylation" value="3 sites"/>
</dbReference>
<dbReference type="iPTMnet" id="Q39054"/>
<dbReference type="PaxDb" id="3702-AT5G20990.1"/>
<dbReference type="ProteomicsDB" id="220540"/>
<dbReference type="EnsemblPlants" id="AT5G20990.1">
    <property type="protein sequence ID" value="AT5G20990.1"/>
    <property type="gene ID" value="AT5G20990"/>
</dbReference>
<dbReference type="GeneID" id="832224"/>
<dbReference type="Gramene" id="AT5G20990.1">
    <property type="protein sequence ID" value="AT5G20990.1"/>
    <property type="gene ID" value="AT5G20990"/>
</dbReference>
<dbReference type="KEGG" id="ath:AT5G20990"/>
<dbReference type="Araport" id="AT5G20990"/>
<dbReference type="TAIR" id="AT5G20990">
    <property type="gene designation" value="B73"/>
</dbReference>
<dbReference type="eggNOG" id="KOG2371">
    <property type="taxonomic scope" value="Eukaryota"/>
</dbReference>
<dbReference type="HOGENOM" id="CLU_010186_6_1_1"/>
<dbReference type="InParanoid" id="Q39054"/>
<dbReference type="OMA" id="HRAIVRW"/>
<dbReference type="OrthoDB" id="4349954at2759"/>
<dbReference type="PhylomeDB" id="Q39054"/>
<dbReference type="BRENDA" id="2.10.1.1">
    <property type="organism ID" value="399"/>
</dbReference>
<dbReference type="BRENDA" id="2.7.7.75">
    <property type="organism ID" value="399"/>
</dbReference>
<dbReference type="SABIO-RK" id="Q39054"/>
<dbReference type="UniPathway" id="UPA00344"/>
<dbReference type="EvolutionaryTrace" id="Q39054"/>
<dbReference type="PRO" id="PR:Q39054"/>
<dbReference type="Proteomes" id="UP000006548">
    <property type="component" value="Chromosome 5"/>
</dbReference>
<dbReference type="ExpressionAtlas" id="Q39054">
    <property type="expression patterns" value="baseline and differential"/>
</dbReference>
<dbReference type="GO" id="GO:0005524">
    <property type="term" value="F:ATP binding"/>
    <property type="evidence" value="ECO:0007669"/>
    <property type="project" value="UniProtKB-KW"/>
</dbReference>
<dbReference type="GO" id="GO:0030151">
    <property type="term" value="F:molybdenum ion binding"/>
    <property type="evidence" value="ECO:0000314"/>
    <property type="project" value="TAIR"/>
</dbReference>
<dbReference type="GO" id="GO:0061598">
    <property type="term" value="F:molybdopterin adenylyltransferase activity"/>
    <property type="evidence" value="ECO:0007669"/>
    <property type="project" value="UniProtKB-EC"/>
</dbReference>
<dbReference type="GO" id="GO:0061599">
    <property type="term" value="F:molybdopterin molybdotransferase activity"/>
    <property type="evidence" value="ECO:0007669"/>
    <property type="project" value="UniProtKB-EC"/>
</dbReference>
<dbReference type="GO" id="GO:0008940">
    <property type="term" value="F:nitrate reductase activity"/>
    <property type="evidence" value="ECO:0000315"/>
    <property type="project" value="CAFA"/>
</dbReference>
<dbReference type="GO" id="GO:0009734">
    <property type="term" value="P:auxin-activated signaling pathway"/>
    <property type="evidence" value="ECO:0000315"/>
    <property type="project" value="TAIR"/>
</dbReference>
<dbReference type="GO" id="GO:0006777">
    <property type="term" value="P:Mo-molybdopterin cofactor biosynthetic process"/>
    <property type="evidence" value="ECO:0007669"/>
    <property type="project" value="UniProtKB-KW"/>
</dbReference>
<dbReference type="GO" id="GO:0010038">
    <property type="term" value="P:response to metal ion"/>
    <property type="evidence" value="ECO:0000315"/>
    <property type="project" value="CAFA"/>
</dbReference>
<dbReference type="CDD" id="cd00887">
    <property type="entry name" value="MoeA"/>
    <property type="match status" value="1"/>
</dbReference>
<dbReference type="CDD" id="cd00886">
    <property type="entry name" value="MogA_MoaB"/>
    <property type="match status" value="1"/>
</dbReference>
<dbReference type="FunFam" id="2.170.190.11:FF:000001">
    <property type="entry name" value="Molybdopterin molybdenumtransferase"/>
    <property type="match status" value="1"/>
</dbReference>
<dbReference type="FunFam" id="2.40.340.10:FF:000004">
    <property type="entry name" value="Molybdopterin molybdenumtransferase"/>
    <property type="match status" value="1"/>
</dbReference>
<dbReference type="FunFam" id="3.40.980.10:FF:000002">
    <property type="entry name" value="Molybdopterin molybdenumtransferase"/>
    <property type="match status" value="1"/>
</dbReference>
<dbReference type="FunFam" id="3.40.980.10:FF:000009">
    <property type="entry name" value="Molybdopterin molybdenumtransferase"/>
    <property type="match status" value="1"/>
</dbReference>
<dbReference type="Gene3D" id="3.40.980.10">
    <property type="entry name" value="MoaB/Mog-like domain"/>
    <property type="match status" value="2"/>
</dbReference>
<dbReference type="Gene3D" id="2.40.340.10">
    <property type="entry name" value="MoeA, C-terminal, domain IV"/>
    <property type="match status" value="1"/>
</dbReference>
<dbReference type="Gene3D" id="3.90.105.10">
    <property type="entry name" value="Molybdopterin biosynthesis moea protein, domain 2"/>
    <property type="match status" value="1"/>
</dbReference>
<dbReference type="Gene3D" id="2.170.190.11">
    <property type="entry name" value="Molybdopterin biosynthesis moea protein, domain 3"/>
    <property type="match status" value="1"/>
</dbReference>
<dbReference type="InterPro" id="IPR036425">
    <property type="entry name" value="MoaB/Mog-like_dom_sf"/>
</dbReference>
<dbReference type="InterPro" id="IPR001453">
    <property type="entry name" value="MoaB/Mog_dom"/>
</dbReference>
<dbReference type="InterPro" id="IPR008284">
    <property type="entry name" value="MoCF_biosynth_CS"/>
</dbReference>
<dbReference type="InterPro" id="IPR038987">
    <property type="entry name" value="MoeA-like"/>
</dbReference>
<dbReference type="InterPro" id="IPR005111">
    <property type="entry name" value="MoeA_C_domain_IV"/>
</dbReference>
<dbReference type="InterPro" id="IPR036688">
    <property type="entry name" value="MoeA_C_domain_IV_sf"/>
</dbReference>
<dbReference type="InterPro" id="IPR005110">
    <property type="entry name" value="MoeA_linker/N"/>
</dbReference>
<dbReference type="InterPro" id="IPR036135">
    <property type="entry name" value="MoeA_linker/N_sf"/>
</dbReference>
<dbReference type="NCBIfam" id="NF045515">
    <property type="entry name" value="Glp_gephyrin"/>
    <property type="match status" value="1"/>
</dbReference>
<dbReference type="NCBIfam" id="TIGR00177">
    <property type="entry name" value="molyb_syn"/>
    <property type="match status" value="2"/>
</dbReference>
<dbReference type="PANTHER" id="PTHR10192:SF5">
    <property type="entry name" value="GEPHYRIN"/>
    <property type="match status" value="1"/>
</dbReference>
<dbReference type="PANTHER" id="PTHR10192">
    <property type="entry name" value="MOLYBDOPTERIN BIOSYNTHESIS PROTEIN"/>
    <property type="match status" value="1"/>
</dbReference>
<dbReference type="Pfam" id="PF00994">
    <property type="entry name" value="MoCF_biosynth"/>
    <property type="match status" value="2"/>
</dbReference>
<dbReference type="Pfam" id="PF03454">
    <property type="entry name" value="MoeA_C"/>
    <property type="match status" value="1"/>
</dbReference>
<dbReference type="Pfam" id="PF03453">
    <property type="entry name" value="MoeA_N"/>
    <property type="match status" value="1"/>
</dbReference>
<dbReference type="SMART" id="SM00852">
    <property type="entry name" value="MoCF_biosynth"/>
    <property type="match status" value="2"/>
</dbReference>
<dbReference type="SUPFAM" id="SSF63867">
    <property type="entry name" value="MoeA C-terminal domain-like"/>
    <property type="match status" value="1"/>
</dbReference>
<dbReference type="SUPFAM" id="SSF63882">
    <property type="entry name" value="MoeA N-terminal region -like"/>
    <property type="match status" value="1"/>
</dbReference>
<dbReference type="SUPFAM" id="SSF53218">
    <property type="entry name" value="Molybdenum cofactor biosynthesis proteins"/>
    <property type="match status" value="2"/>
</dbReference>
<dbReference type="PROSITE" id="PS01078">
    <property type="entry name" value="MOCF_BIOSYNTHESIS_1"/>
    <property type="match status" value="1"/>
</dbReference>
<dbReference type="PROSITE" id="PS01079">
    <property type="entry name" value="MOCF_BIOSYNTHESIS_2"/>
    <property type="match status" value="1"/>
</dbReference>
<name>CNX1_ARATH</name>
<protein>
    <recommendedName>
        <fullName>Molybdopterin biosynthesis protein CNX1</fullName>
    </recommendedName>
    <alternativeName>
        <fullName>Molybdenum cofactor biosynthesis enzyme CNX1</fullName>
    </alternativeName>
    <domain>
        <recommendedName>
            <fullName>Molybdopterin molybdenumtransferase</fullName>
            <shortName>MPT Mo-transferase</shortName>
            <ecNumber>2.10.1.1</ecNumber>
        </recommendedName>
        <alternativeName>
            <fullName>Domain E</fullName>
        </alternativeName>
    </domain>
    <domain>
        <recommendedName>
            <fullName>Molybdopterin adenylyltransferase</fullName>
            <shortName>MPT adenylyltransferase</shortName>
            <ecNumber>2.7.7.75</ecNumber>
        </recommendedName>
        <alternativeName>
            <fullName>Domain G</fullName>
        </alternativeName>
    </domain>
</protein>
<accession>Q39054</accession>